<sequence length="1319" mass="144194">MGPQLATVSLLLLTFFSNSIQYPHSPAATECPAYFNGNIAGNACSREYSICVNGVRQAATCSDDSVFYEDECVPVDESPECRVDENTEEDDTPYAEFDCTSKQDGIYSIGCSNQFISCVAGGAYMAKCPDSLVFNERTQDCRESCDEVKQDTTTAPQVYEDGEEGYGEASGEIAGDYERQPSNEQPDSIDFDCNGLEDGNYADGCNDVFYSCSNNMVFQRYCPPGTVFNINQQSCDFQCTTDDPTTTVSYSTSTITTPQEDDSEYSSTTSADVISTTTTPSIDAIETTTTGFDAVTTTTTTQTPFVCQEGQVNSFGMCSSRFNRCQNNSVRSKQCPVNTLFESSLVMCVFDLPQCQPITVPAAPAYNSYGPPSDTIVSPFDENVRLKPKFDRRRKYHHGKPSYGPVNGNSYLENPFFIPRHRGGSHRDHRRYGYGPAIDSPFSTAFRGRAALSDQFKDYRRARMGKIQGDARKVDGNKRFLIDDEFEGPNAKFVESNIEQVFPKNRHSKKQLGPHEDPDGYDDEKTFDAKDLFGATRRKRSAYYGTEQSVYGQQSAQISARQAQVNKDCQQYTTPTFLTFGDCFDQFIFCSGNGINRMAACPIGETFDKTLRSCSETCGVSTTIVAVTIGTQTSDDLSAPSEYIENDGVTTQSTWNDQPSTTQAPNSYESYTTQYSSNDVPSTSAAPIGDRCSLDASGLFSLGCSQKYIQCSNGAAIVRRCGESLYFNEATQECTYRDEVPECGSQGSTSSPVITTPGQDQSSNYYGIPSDDVPSTTQTPVGDRCAYVASGLFDLGCSQKYIQCSDSAASVRECEGSLYFDERSQSCRFRDEVFKCQTADVSSSSTVPYLDFTTTPASPSEDEPTTYEPSVAPYIPSVTVNPVDTCTSLSDGTHGTGCSSFYFVCSHGRLISSGNCQLGEGYDPSVQGCRTFSEIPARACDEQEVTTDAGLVQLMPYKTLEEVLTTTEAATTVANDGPTDTYITGSTKYSTTDSGEYTIPYGDETTSTRSYDRADNDSEDEEEDDVEHDQKCTVGSRTPVGFCVRTYLECTDAGNVEKLCRIGKLFDSHSNRCVPRIGCGKEAIRDAIKDMIATTPAPAQPKQFEGRCAHVDGEAVFSIGVCSSKYLRCSYGASKLQQCSEDRVFSNDKLECIVRESVSACTVPKNPSIKKYYTSNDQSAFCDGKEDGLYRNERDCSAILQCFGGELFEHPSCQSSLAFNQLTGKCDYPQKVSGCENHGQTNGECSEHGSFIADANNCEVFYRCVWGRKVVMTCPSGTVFNPLLSVCDWPSAVPSCSGQASDSNSSYGSSTYNDDKSGY</sequence>
<gene>
    <name evidence="8" type="primary">cbd-1</name>
    <name evidence="8" type="ORF">H02I12.1</name>
</gene>
<comment type="function">
    <text evidence="5">In unfertilized oocytes, maintains egg-1 and egg-2 at the plasma membrane together with chitin synthase chs-1 and kinase mbk-2. Essential for the formation of a continuous and cohesive chitin layer following fertilization.</text>
</comment>
<comment type="subcellular location">
    <subcellularLocation>
        <location evidence="5">Secreted</location>
        <location evidence="5">Extracellular space</location>
        <location evidence="5">Extracellular matrix</location>
    </subcellularLocation>
    <text evidence="5">Localizes around oocytes in the proximal region of the germline.</text>
</comment>
<comment type="disruption phenotype">
    <text evidence="5">RNAi-mediated knockdown causes the zygote to exit the spermatheca with a pinched morphology and to leave a trailing section behind. Zygotes have a fragmented chitin eggshell with an accumulation of chitin at one end of the embryo, causing polyspermy. In unfertilized oocytes, disrupts the homogenous distribution of cortical chitin synthase chs-1, pseudophosphatase egg-3 and kinase mbk-2 and causes the loss of egg-1 and egg-2 cell membrane localization resulting in their premature accumulation in cytoplasmic puncta.</text>
</comment>
<keyword id="KW-0147">Chitin-binding</keyword>
<keyword id="KW-0217">Developmental protein</keyword>
<keyword id="KW-1015">Disulfide bond</keyword>
<keyword id="KW-0272">Extracellular matrix</keyword>
<keyword id="KW-0325">Glycoprotein</keyword>
<keyword id="KW-1185">Reference proteome</keyword>
<keyword id="KW-0677">Repeat</keyword>
<keyword id="KW-0964">Secreted</keyword>
<keyword id="KW-0732">Signal</keyword>
<name>CBD1_CAEEL</name>
<protein>
    <recommendedName>
        <fullName evidence="8">Chitin-binding domain protein cbd-1</fullName>
    </recommendedName>
</protein>
<accession>O45599</accession>
<reference evidence="7" key="1">
    <citation type="journal article" date="1998" name="Science">
        <title>Genome sequence of the nematode C. elegans: a platform for investigating biology.</title>
        <authorList>
            <consortium name="The C. elegans sequencing consortium"/>
        </authorList>
    </citation>
    <scope>NUCLEOTIDE SEQUENCE [LARGE SCALE GENOMIC DNA]</scope>
    <source>
        <strain evidence="7">Bristol N2</strain>
    </source>
</reference>
<reference evidence="6" key="2">
    <citation type="journal article" date="2010" name="Curr. Biol.">
        <title>Eggshell chitin and chitin-interacting proteins prevent polyspermy in C. elegans.</title>
        <authorList>
            <person name="Johnston W.L."/>
            <person name="Krizus A."/>
            <person name="Dennis J.W."/>
        </authorList>
    </citation>
    <scope>FUNCTION</scope>
    <scope>SUBCELLULAR LOCATION</scope>
    <scope>DISRUPTION PHENOTYPE</scope>
</reference>
<feature type="signal peptide" evidence="1">
    <location>
        <begin position="1"/>
        <end position="19"/>
    </location>
</feature>
<feature type="chain" id="PRO_5004158351" description="Chitin-binding domain protein cbd-1">
    <location>
        <begin position="20"/>
        <end position="1319"/>
    </location>
</feature>
<feature type="domain" description="Chitin-binding type-2 1" evidence="2">
    <location>
        <begin position="28"/>
        <end position="83"/>
    </location>
</feature>
<feature type="domain" description="Chitin-binding type-2 2" evidence="2">
    <location>
        <begin position="96"/>
        <end position="141"/>
    </location>
</feature>
<feature type="domain" description="Chitin-binding type-2 3" evidence="2">
    <location>
        <begin position="190"/>
        <end position="236"/>
    </location>
</feature>
<feature type="domain" description="Chitin-binding type-2 4" evidence="2">
    <location>
        <begin position="304"/>
        <end position="357"/>
    </location>
</feature>
<feature type="domain" description="Chitin-binding type-2 5" evidence="2">
    <location>
        <begin position="566"/>
        <end position="614"/>
    </location>
</feature>
<feature type="domain" description="Chitin-binding type-2 6" evidence="2">
    <location>
        <begin position="689"/>
        <end position="745"/>
    </location>
</feature>
<feature type="domain" description="Chitin-binding type-2 7" evidence="2">
    <location>
        <begin position="782"/>
        <end position="838"/>
    </location>
</feature>
<feature type="domain" description="Chitin-binding type-2 8" evidence="2">
    <location>
        <begin position="883"/>
        <end position="942"/>
    </location>
</feature>
<feature type="domain" description="Chitin-binding type-2 9" evidence="2">
    <location>
        <begin position="1029"/>
        <end position="1081"/>
    </location>
</feature>
<feature type="domain" description="Chitin-binding type-2 10" evidence="2">
    <location>
        <begin position="1105"/>
        <end position="1163"/>
    </location>
</feature>
<feature type="domain" description="Chitin-binding type-2 11" evidence="2">
    <location>
        <begin position="1179"/>
        <end position="1237"/>
    </location>
</feature>
<feature type="domain" description="Chitin-binding type-2 12" evidence="2">
    <location>
        <begin position="1242"/>
        <end position="1298"/>
    </location>
</feature>
<feature type="region of interest" description="Disordered" evidence="4">
    <location>
        <begin position="250"/>
        <end position="271"/>
    </location>
</feature>
<feature type="region of interest" description="Disordered" evidence="4">
    <location>
        <begin position="504"/>
        <end position="524"/>
    </location>
</feature>
<feature type="region of interest" description="Disordered" evidence="4">
    <location>
        <begin position="649"/>
        <end position="682"/>
    </location>
</feature>
<feature type="region of interest" description="Disordered" evidence="4">
    <location>
        <begin position="742"/>
        <end position="764"/>
    </location>
</feature>
<feature type="region of interest" description="Disordered" evidence="4">
    <location>
        <begin position="984"/>
        <end position="1031"/>
    </location>
</feature>
<feature type="region of interest" description="Disordered" evidence="4">
    <location>
        <begin position="1297"/>
        <end position="1319"/>
    </location>
</feature>
<feature type="compositionally biased region" description="Basic and acidic residues" evidence="4">
    <location>
        <begin position="513"/>
        <end position="524"/>
    </location>
</feature>
<feature type="compositionally biased region" description="Polar residues" evidence="4">
    <location>
        <begin position="745"/>
        <end position="764"/>
    </location>
</feature>
<feature type="compositionally biased region" description="Polar residues" evidence="4">
    <location>
        <begin position="984"/>
        <end position="995"/>
    </location>
</feature>
<feature type="compositionally biased region" description="Acidic residues" evidence="4">
    <location>
        <begin position="1017"/>
        <end position="1027"/>
    </location>
</feature>
<feature type="compositionally biased region" description="Low complexity" evidence="4">
    <location>
        <begin position="1297"/>
        <end position="1312"/>
    </location>
</feature>
<feature type="glycosylation site" description="N-linked (GlcNAc...) asparagine" evidence="3">
    <location>
        <position position="327"/>
    </location>
</feature>
<feature type="glycosylation site" description="N-linked (GlcNAc...) asparagine" evidence="3">
    <location>
        <position position="1016"/>
    </location>
</feature>
<feature type="glycosylation site" description="N-linked (GlcNAc...) asparagine" evidence="3">
    <location>
        <position position="1304"/>
    </location>
</feature>
<feature type="disulfide bond" evidence="2">
    <location>
        <begin position="61"/>
        <end position="72"/>
    </location>
</feature>
<feature type="disulfide bond" evidence="2">
    <location>
        <begin position="128"/>
        <end position="141"/>
    </location>
</feature>
<feature type="disulfide bond" evidence="2">
    <location>
        <begin position="222"/>
        <end position="235"/>
    </location>
</feature>
<feature type="disulfide bond" evidence="2">
    <location>
        <begin position="335"/>
        <end position="348"/>
    </location>
</feature>
<feature type="disulfide bond" evidence="2">
    <location>
        <begin position="601"/>
        <end position="614"/>
    </location>
</feature>
<feature type="disulfide bond" evidence="2">
    <location>
        <begin position="721"/>
        <end position="734"/>
    </location>
</feature>
<feature type="disulfide bond" evidence="2">
    <location>
        <begin position="814"/>
        <end position="827"/>
    </location>
</feature>
<feature type="disulfide bond" evidence="2">
    <location>
        <begin position="916"/>
        <end position="929"/>
    </location>
</feature>
<feature type="disulfide bond" evidence="2">
    <location>
        <begin position="1060"/>
        <end position="1073"/>
    </location>
</feature>
<feature type="disulfide bond" evidence="2">
    <location>
        <begin position="1139"/>
        <end position="1152"/>
    </location>
</feature>
<feature type="disulfide bond" evidence="2">
    <location>
        <begin position="1213"/>
        <end position="1226"/>
    </location>
</feature>
<feature type="disulfide bond" evidence="2">
    <location>
        <begin position="1274"/>
        <end position="1287"/>
    </location>
</feature>
<dbReference type="EMBL" id="BX284604">
    <property type="protein sequence ID" value="CAB07215.2"/>
    <property type="molecule type" value="Genomic_DNA"/>
</dbReference>
<dbReference type="PIR" id="T23024">
    <property type="entry name" value="T23024"/>
</dbReference>
<dbReference type="RefSeq" id="NP_502145.2">
    <property type="nucleotide sequence ID" value="NM_069744.8"/>
</dbReference>
<dbReference type="SMR" id="O45599"/>
<dbReference type="DIP" id="DIP-26633N"/>
<dbReference type="FunCoup" id="O45599">
    <property type="interactions" value="13"/>
</dbReference>
<dbReference type="IntAct" id="O45599">
    <property type="interactions" value="4"/>
</dbReference>
<dbReference type="STRING" id="6239.H02I12.1.1"/>
<dbReference type="CAZy" id="CBM14">
    <property type="family name" value="Carbohydrate-Binding Module Family 14"/>
</dbReference>
<dbReference type="GlyCosmos" id="O45599">
    <property type="glycosylation" value="3 sites, No reported glycans"/>
</dbReference>
<dbReference type="PaxDb" id="6239-H02I12.1"/>
<dbReference type="PeptideAtlas" id="O45599"/>
<dbReference type="EnsemblMetazoa" id="H02I12.1.1">
    <property type="protein sequence ID" value="H02I12.1.1"/>
    <property type="gene ID" value="WBGene00010351"/>
</dbReference>
<dbReference type="GeneID" id="178061"/>
<dbReference type="KEGG" id="cel:CELE_H02I12.1"/>
<dbReference type="UCSC" id="H02I12.1">
    <property type="organism name" value="c. elegans"/>
</dbReference>
<dbReference type="AGR" id="WB:WBGene00010351"/>
<dbReference type="CTD" id="178061"/>
<dbReference type="WormBase" id="H02I12.1">
    <property type="protein sequence ID" value="CE37527"/>
    <property type="gene ID" value="WBGene00010351"/>
    <property type="gene designation" value="cbd-1"/>
</dbReference>
<dbReference type="eggNOG" id="ENOG502SA2C">
    <property type="taxonomic scope" value="Eukaryota"/>
</dbReference>
<dbReference type="GeneTree" id="ENSGT00940000166041"/>
<dbReference type="HOGENOM" id="CLU_261097_0_0_1"/>
<dbReference type="InParanoid" id="O45599"/>
<dbReference type="OMA" id="WGRKVVM"/>
<dbReference type="OrthoDB" id="6020543at2759"/>
<dbReference type="PRO" id="PR:O45599"/>
<dbReference type="Proteomes" id="UP000001940">
    <property type="component" value="Chromosome IV"/>
</dbReference>
<dbReference type="Bgee" id="WBGene00010351">
    <property type="expression patterns" value="Expressed in germ line (C elegans) and 3 other cell types or tissues"/>
</dbReference>
<dbReference type="GO" id="GO:0071944">
    <property type="term" value="C:cell periphery"/>
    <property type="evidence" value="ECO:0000314"/>
    <property type="project" value="WormBase"/>
</dbReference>
<dbReference type="GO" id="GO:0005576">
    <property type="term" value="C:extracellular region"/>
    <property type="evidence" value="ECO:0007669"/>
    <property type="project" value="UniProtKB-KW"/>
</dbReference>
<dbReference type="GO" id="GO:0008061">
    <property type="term" value="F:chitin binding"/>
    <property type="evidence" value="ECO:0007669"/>
    <property type="project" value="UniProtKB-KW"/>
</dbReference>
<dbReference type="GO" id="GO:0030703">
    <property type="term" value="P:eggshell formation"/>
    <property type="evidence" value="ECO:0000315"/>
    <property type="project" value="UniProtKB"/>
</dbReference>
<dbReference type="GO" id="GO:1904778">
    <property type="term" value="P:positive regulation of protein localization to cell cortex"/>
    <property type="evidence" value="ECO:0000315"/>
    <property type="project" value="UniProtKB"/>
</dbReference>
<dbReference type="GO" id="GO:1903078">
    <property type="term" value="P:positive regulation of protein localization to plasma membrane"/>
    <property type="evidence" value="ECO:0000315"/>
    <property type="project" value="UniProtKB"/>
</dbReference>
<dbReference type="FunFam" id="2.170.140.10:FF:000009">
    <property type="entry name" value="Chondroitin proteoglycan 1"/>
    <property type="match status" value="2"/>
</dbReference>
<dbReference type="FunFam" id="2.170.140.10:FF:000023">
    <property type="entry name" value="Predicted protein"/>
    <property type="match status" value="1"/>
</dbReference>
<dbReference type="Gene3D" id="2.170.140.10">
    <property type="entry name" value="Chitin binding domain"/>
    <property type="match status" value="5"/>
</dbReference>
<dbReference type="Gene3D" id="3.20.20.80">
    <property type="entry name" value="Glycosidases"/>
    <property type="match status" value="1"/>
</dbReference>
<dbReference type="InterPro" id="IPR002557">
    <property type="entry name" value="Chitin-bd_dom"/>
</dbReference>
<dbReference type="InterPro" id="IPR036508">
    <property type="entry name" value="Chitin-bd_dom_sf"/>
</dbReference>
<dbReference type="InterPro" id="IPR051940">
    <property type="entry name" value="Chitin_bind-dev_reg"/>
</dbReference>
<dbReference type="PANTHER" id="PTHR23301">
    <property type="entry name" value="CHITIN BINDING PERITROPHIN-A"/>
    <property type="match status" value="1"/>
</dbReference>
<dbReference type="PANTHER" id="PTHR23301:SF0">
    <property type="entry name" value="CHITIN-BINDING TYPE-2 DOMAIN-CONTAINING PROTEIN-RELATED"/>
    <property type="match status" value="1"/>
</dbReference>
<dbReference type="Pfam" id="PF01607">
    <property type="entry name" value="CBM_14"/>
    <property type="match status" value="9"/>
</dbReference>
<dbReference type="SMART" id="SM00494">
    <property type="entry name" value="ChtBD2"/>
    <property type="match status" value="12"/>
</dbReference>
<dbReference type="SUPFAM" id="SSF57625">
    <property type="entry name" value="Invertebrate chitin-binding proteins"/>
    <property type="match status" value="8"/>
</dbReference>
<dbReference type="PROSITE" id="PS50940">
    <property type="entry name" value="CHIT_BIND_II"/>
    <property type="match status" value="12"/>
</dbReference>
<organism evidence="7">
    <name type="scientific">Caenorhabditis elegans</name>
    <dbReference type="NCBI Taxonomy" id="6239"/>
    <lineage>
        <taxon>Eukaryota</taxon>
        <taxon>Metazoa</taxon>
        <taxon>Ecdysozoa</taxon>
        <taxon>Nematoda</taxon>
        <taxon>Chromadorea</taxon>
        <taxon>Rhabditida</taxon>
        <taxon>Rhabditina</taxon>
        <taxon>Rhabditomorpha</taxon>
        <taxon>Rhabditoidea</taxon>
        <taxon>Rhabditidae</taxon>
        <taxon>Peloderinae</taxon>
        <taxon>Caenorhabditis</taxon>
    </lineage>
</organism>
<proteinExistence type="inferred from homology"/>
<evidence type="ECO:0000255" key="1"/>
<evidence type="ECO:0000255" key="2">
    <source>
        <dbReference type="PROSITE-ProRule" id="PRU00144"/>
    </source>
</evidence>
<evidence type="ECO:0000255" key="3">
    <source>
        <dbReference type="PROSITE-ProRule" id="PRU00498"/>
    </source>
</evidence>
<evidence type="ECO:0000256" key="4">
    <source>
        <dbReference type="SAM" id="MobiDB-lite"/>
    </source>
</evidence>
<evidence type="ECO:0000269" key="5">
    <source>
    </source>
</evidence>
<evidence type="ECO:0000305" key="6"/>
<evidence type="ECO:0000312" key="7">
    <source>
        <dbReference type="Proteomes" id="UP000001940"/>
    </source>
</evidence>
<evidence type="ECO:0000312" key="8">
    <source>
        <dbReference type="WormBase" id="H02I12.1"/>
    </source>
</evidence>